<organism>
    <name type="scientific">Oryza sativa subsp. indica</name>
    <name type="common">Rice</name>
    <dbReference type="NCBI Taxonomy" id="39946"/>
    <lineage>
        <taxon>Eukaryota</taxon>
        <taxon>Viridiplantae</taxon>
        <taxon>Streptophyta</taxon>
        <taxon>Embryophyta</taxon>
        <taxon>Tracheophyta</taxon>
        <taxon>Spermatophyta</taxon>
        <taxon>Magnoliopsida</taxon>
        <taxon>Liliopsida</taxon>
        <taxon>Poales</taxon>
        <taxon>Poaceae</taxon>
        <taxon>BOP clade</taxon>
        <taxon>Oryzoideae</taxon>
        <taxon>Oryzeae</taxon>
        <taxon>Oryzinae</taxon>
        <taxon>Oryza</taxon>
        <taxon>Oryza sativa</taxon>
    </lineage>
</organism>
<protein>
    <recommendedName>
        <fullName evidence="3">Protein CADMIUM TOLERANCE 1</fullName>
        <shortName evidence="3">Cd tolerant 1</shortName>
        <shortName evidence="3">OsCDT1</shortName>
    </recommendedName>
</protein>
<name>CDT1_ORYSI</name>
<comment type="function">
    <text evidence="1">Confers resistance to heavy metal ions (e.g. cadmium (CdCl(2)) and copper (CuCl(2))) by chelating them at the plasma membrane of root cells, thus stopping their entry and reducing their accumulation (By similarity). Binds to aluminium (Al) (By similarity).</text>
</comment>
<comment type="subcellular location">
    <subcellularLocation>
        <location evidence="1">Cell membrane</location>
        <topology evidence="2">Single-pass membrane protein</topology>
    </subcellularLocation>
    <subcellularLocation>
        <location evidence="1">Secreted</location>
        <location evidence="1">Cell wall</location>
    </subcellularLocation>
</comment>
<comment type="similarity">
    <text evidence="3">Belongs to the CYSTM1 family.</text>
</comment>
<comment type="sequence caution" evidence="3">
    <conflict type="erroneous initiation">
        <sequence resource="EMBL-CDS" id="EEC79970"/>
    </conflict>
    <text>Truncated N-terminus.</text>
</comment>
<gene>
    <name evidence="3" type="primary">CDT1</name>
    <name evidence="4" type="ORF">OsI_21594</name>
</gene>
<keyword id="KW-1003">Cell membrane</keyword>
<keyword id="KW-0134">Cell wall</keyword>
<keyword id="KW-0472">Membrane</keyword>
<keyword id="KW-0479">Metal-binding</keyword>
<keyword id="KW-1185">Reference proteome</keyword>
<keyword id="KW-0964">Secreted</keyword>
<keyword id="KW-0346">Stress response</keyword>
<keyword id="KW-0812">Transmembrane</keyword>
<keyword id="KW-1133">Transmembrane helix</keyword>
<accession>B8B2D0</accession>
<reference key="1">
    <citation type="journal article" date="2005" name="PLoS Biol.">
        <title>The genomes of Oryza sativa: a history of duplications.</title>
        <authorList>
            <person name="Yu J."/>
            <person name="Wang J."/>
            <person name="Lin W."/>
            <person name="Li S."/>
            <person name="Li H."/>
            <person name="Zhou J."/>
            <person name="Ni P."/>
            <person name="Dong W."/>
            <person name="Hu S."/>
            <person name="Zeng C."/>
            <person name="Zhang J."/>
            <person name="Zhang Y."/>
            <person name="Li R."/>
            <person name="Xu Z."/>
            <person name="Li S."/>
            <person name="Li X."/>
            <person name="Zheng H."/>
            <person name="Cong L."/>
            <person name="Lin L."/>
            <person name="Yin J."/>
            <person name="Geng J."/>
            <person name="Li G."/>
            <person name="Shi J."/>
            <person name="Liu J."/>
            <person name="Lv H."/>
            <person name="Li J."/>
            <person name="Wang J."/>
            <person name="Deng Y."/>
            <person name="Ran L."/>
            <person name="Shi X."/>
            <person name="Wang X."/>
            <person name="Wu Q."/>
            <person name="Li C."/>
            <person name="Ren X."/>
            <person name="Wang J."/>
            <person name="Wang X."/>
            <person name="Li D."/>
            <person name="Liu D."/>
            <person name="Zhang X."/>
            <person name="Ji Z."/>
            <person name="Zhao W."/>
            <person name="Sun Y."/>
            <person name="Zhang Z."/>
            <person name="Bao J."/>
            <person name="Han Y."/>
            <person name="Dong L."/>
            <person name="Ji J."/>
            <person name="Chen P."/>
            <person name="Wu S."/>
            <person name="Liu J."/>
            <person name="Xiao Y."/>
            <person name="Bu D."/>
            <person name="Tan J."/>
            <person name="Yang L."/>
            <person name="Ye C."/>
            <person name="Zhang J."/>
            <person name="Xu J."/>
            <person name="Zhou Y."/>
            <person name="Yu Y."/>
            <person name="Zhang B."/>
            <person name="Zhuang S."/>
            <person name="Wei H."/>
            <person name="Liu B."/>
            <person name="Lei M."/>
            <person name="Yu H."/>
            <person name="Li Y."/>
            <person name="Xu H."/>
            <person name="Wei S."/>
            <person name="He X."/>
            <person name="Fang L."/>
            <person name="Zhang Z."/>
            <person name="Zhang Y."/>
            <person name="Huang X."/>
            <person name="Su Z."/>
            <person name="Tong W."/>
            <person name="Li J."/>
            <person name="Tong Z."/>
            <person name="Li S."/>
            <person name="Ye J."/>
            <person name="Wang L."/>
            <person name="Fang L."/>
            <person name="Lei T."/>
            <person name="Chen C.-S."/>
            <person name="Chen H.-C."/>
            <person name="Xu Z."/>
            <person name="Li H."/>
            <person name="Huang H."/>
            <person name="Zhang F."/>
            <person name="Xu H."/>
            <person name="Li N."/>
            <person name="Zhao C."/>
            <person name="Li S."/>
            <person name="Dong L."/>
            <person name="Huang Y."/>
            <person name="Li L."/>
            <person name="Xi Y."/>
            <person name="Qi Q."/>
            <person name="Li W."/>
            <person name="Zhang B."/>
            <person name="Hu W."/>
            <person name="Zhang Y."/>
            <person name="Tian X."/>
            <person name="Jiao Y."/>
            <person name="Liang X."/>
            <person name="Jin J."/>
            <person name="Gao L."/>
            <person name="Zheng W."/>
            <person name="Hao B."/>
            <person name="Liu S.-M."/>
            <person name="Wang W."/>
            <person name="Yuan L."/>
            <person name="Cao M."/>
            <person name="McDermott J."/>
            <person name="Samudrala R."/>
            <person name="Wang J."/>
            <person name="Wong G.K.-S."/>
            <person name="Yang H."/>
        </authorList>
    </citation>
    <scope>NUCLEOTIDE SEQUENCE [LARGE SCALE GENOMIC DNA]</scope>
    <source>
        <strain>cv. 93-11</strain>
    </source>
</reference>
<sequence length="55" mass="6448">MYNAPMAQEMSYYEHVQRRHEEKGCLYACIFTALCCFCCYETCECCLDCLCCCCN</sequence>
<feature type="chain" id="PRO_0000454814" description="Protein CADMIUM TOLERANCE 1">
    <location>
        <begin position="1"/>
        <end position="55"/>
    </location>
</feature>
<feature type="transmembrane region" description="Helical" evidence="2">
    <location>
        <begin position="24"/>
        <end position="40"/>
    </location>
</feature>
<dbReference type="EMBL" id="CM000131">
    <property type="protein sequence ID" value="EEC79970.1"/>
    <property type="status" value="ALT_INIT"/>
    <property type="molecule type" value="Genomic_DNA"/>
</dbReference>
<dbReference type="HOGENOM" id="CLU_156676_2_0_1"/>
<dbReference type="OrthoDB" id="1939700at2759"/>
<dbReference type="Proteomes" id="UP000007015">
    <property type="component" value="Chromosome 6"/>
</dbReference>
<dbReference type="GO" id="GO:0005576">
    <property type="term" value="C:extracellular region"/>
    <property type="evidence" value="ECO:0007669"/>
    <property type="project" value="UniProtKB-KW"/>
</dbReference>
<dbReference type="GO" id="GO:0009505">
    <property type="term" value="C:plant-type cell wall"/>
    <property type="evidence" value="ECO:0000250"/>
    <property type="project" value="UniProtKB"/>
</dbReference>
<dbReference type="GO" id="GO:0005886">
    <property type="term" value="C:plasma membrane"/>
    <property type="evidence" value="ECO:0000250"/>
    <property type="project" value="UniProtKB"/>
</dbReference>
<dbReference type="GO" id="GO:0046872">
    <property type="term" value="F:metal ion binding"/>
    <property type="evidence" value="ECO:0000250"/>
    <property type="project" value="UniProtKB"/>
</dbReference>
<dbReference type="GO" id="GO:0140487">
    <property type="term" value="F:metal ion sequestering activity"/>
    <property type="evidence" value="ECO:0000250"/>
    <property type="project" value="UniProtKB"/>
</dbReference>
<dbReference type="GO" id="GO:1990748">
    <property type="term" value="P:cellular detoxification"/>
    <property type="evidence" value="ECO:0000250"/>
    <property type="project" value="UniProtKB"/>
</dbReference>
<dbReference type="GO" id="GO:0071585">
    <property type="term" value="P:detoxification of cadmium ion"/>
    <property type="evidence" value="ECO:0000250"/>
    <property type="project" value="UniProtKB"/>
</dbReference>
<dbReference type="GO" id="GO:0010273">
    <property type="term" value="P:detoxification of copper ion"/>
    <property type="evidence" value="ECO:0000250"/>
    <property type="project" value="UniProtKB"/>
</dbReference>
<dbReference type="InterPro" id="IPR051671">
    <property type="entry name" value="CYSTM1_HM_Tolerance"/>
</dbReference>
<dbReference type="InterPro" id="IPR028144">
    <property type="entry name" value="CYSTM_dom"/>
</dbReference>
<dbReference type="PANTHER" id="PTHR35470">
    <property type="entry name" value="CADMIUM TOLERANT 3"/>
    <property type="match status" value="1"/>
</dbReference>
<dbReference type="PANTHER" id="PTHR35470:SF12">
    <property type="entry name" value="PROTEIN CADMIUM TOLERANCE 1"/>
    <property type="match status" value="1"/>
</dbReference>
<dbReference type="Pfam" id="PF12734">
    <property type="entry name" value="CYSTM"/>
    <property type="match status" value="1"/>
</dbReference>
<evidence type="ECO:0000250" key="1">
    <source>
        <dbReference type="UniProtKB" id="Q5VSB5"/>
    </source>
</evidence>
<evidence type="ECO:0000255" key="2"/>
<evidence type="ECO:0000305" key="3"/>
<evidence type="ECO:0000312" key="4">
    <source>
        <dbReference type="EMBL" id="EEC79970.1"/>
    </source>
</evidence>
<proteinExistence type="inferred from homology"/>